<organism>
    <name type="scientific">Salinibacter ruber (strain DSM 13855 / M31)</name>
    <dbReference type="NCBI Taxonomy" id="309807"/>
    <lineage>
        <taxon>Bacteria</taxon>
        <taxon>Pseudomonadati</taxon>
        <taxon>Rhodothermota</taxon>
        <taxon>Rhodothermia</taxon>
        <taxon>Rhodothermales</taxon>
        <taxon>Salinibacteraceae</taxon>
        <taxon>Salinibacter</taxon>
    </lineage>
</organism>
<name>METK_SALRD</name>
<comment type="function">
    <text evidence="1">Catalyzes the formation of S-adenosylmethionine (AdoMet) from methionine and ATP. The overall synthetic reaction is composed of two sequential steps, AdoMet formation and the subsequent tripolyphosphate hydrolysis which occurs prior to release of AdoMet from the enzyme.</text>
</comment>
<comment type="catalytic activity">
    <reaction evidence="1">
        <text>L-methionine + ATP + H2O = S-adenosyl-L-methionine + phosphate + diphosphate</text>
        <dbReference type="Rhea" id="RHEA:21080"/>
        <dbReference type="ChEBI" id="CHEBI:15377"/>
        <dbReference type="ChEBI" id="CHEBI:30616"/>
        <dbReference type="ChEBI" id="CHEBI:33019"/>
        <dbReference type="ChEBI" id="CHEBI:43474"/>
        <dbReference type="ChEBI" id="CHEBI:57844"/>
        <dbReference type="ChEBI" id="CHEBI:59789"/>
        <dbReference type="EC" id="2.5.1.6"/>
    </reaction>
</comment>
<comment type="cofactor">
    <cofactor evidence="1">
        <name>Mg(2+)</name>
        <dbReference type="ChEBI" id="CHEBI:18420"/>
    </cofactor>
    <text evidence="1">Binds 2 divalent ions per subunit.</text>
</comment>
<comment type="cofactor">
    <cofactor evidence="1">
        <name>K(+)</name>
        <dbReference type="ChEBI" id="CHEBI:29103"/>
    </cofactor>
    <text evidence="1">Binds 1 potassium ion per subunit.</text>
</comment>
<comment type="pathway">
    <text evidence="1">Amino-acid biosynthesis; S-adenosyl-L-methionine biosynthesis; S-adenosyl-L-methionine from L-methionine: step 1/1.</text>
</comment>
<comment type="subunit">
    <text evidence="1">Homotetramer; dimer of dimers.</text>
</comment>
<comment type="subcellular location">
    <subcellularLocation>
        <location evidence="1">Cytoplasm</location>
    </subcellularLocation>
</comment>
<comment type="similarity">
    <text evidence="1">Belongs to the AdoMet synthase family.</text>
</comment>
<reference key="1">
    <citation type="journal article" date="2005" name="Proc. Natl. Acad. Sci. U.S.A.">
        <title>The genome of Salinibacter ruber: convergence and gene exchange among hyperhalophilic bacteria and archaea.</title>
        <authorList>
            <person name="Mongodin E.F."/>
            <person name="Nelson K.E."/>
            <person name="Daugherty S."/>
            <person name="DeBoy R.T."/>
            <person name="Wister J."/>
            <person name="Khouri H."/>
            <person name="Weidman J."/>
            <person name="Walsh D.A."/>
            <person name="Papke R.T."/>
            <person name="Sanchez Perez G."/>
            <person name="Sharma A.K."/>
            <person name="Nesbo C.L."/>
            <person name="MacLeod D."/>
            <person name="Bapteste E."/>
            <person name="Doolittle W.F."/>
            <person name="Charlebois R.L."/>
            <person name="Legault B."/>
            <person name="Rodriguez-Valera F."/>
        </authorList>
    </citation>
    <scope>NUCLEOTIDE SEQUENCE [LARGE SCALE GENOMIC DNA]</scope>
    <source>
        <strain>DSM 13855 / CECT 5946 / M31</strain>
    </source>
</reference>
<keyword id="KW-0067">ATP-binding</keyword>
<keyword id="KW-0963">Cytoplasm</keyword>
<keyword id="KW-0460">Magnesium</keyword>
<keyword id="KW-0479">Metal-binding</keyword>
<keyword id="KW-0547">Nucleotide-binding</keyword>
<keyword id="KW-0554">One-carbon metabolism</keyword>
<keyword id="KW-0630">Potassium</keyword>
<keyword id="KW-1185">Reference proteome</keyword>
<keyword id="KW-0808">Transferase</keyword>
<sequence length="386" mass="42230">MAYLFTSESVSEGHPDKIADQISDAILDAHLAEDRNSRVAAETLVTSGLVVLSGEITSQARVEPREIAREVIRDIGYTDPRIRFDAESCGVISSLHEQSGDISQGVDGGEEQGAGDQGLMFGYACRETEELMPMPITFSHRLVQELAHIRKETDKMPYLRPDSKSQVTIEYKEDRMTPRRVHTVVVSTQHDEGVPQKKIREDVRDILLPRALPTDLLDEDLILHVNPTGRFVTGGPHGDTGVTGRKIIVDTYGGKGAHGGGAFSGKDPSKVDRSATYAARHVAKNLVAAELCDEAEVQLAYAIGVAEPVSIDVSTNGTGVLPDTELCEMVREHFELSPSAIIDRLDLLKPRYQKTAAYGHFGRPTFPWEELTHVEALKRDAPAVAS</sequence>
<evidence type="ECO:0000255" key="1">
    <source>
        <dbReference type="HAMAP-Rule" id="MF_00086"/>
    </source>
</evidence>
<gene>
    <name evidence="1" type="primary">metK</name>
    <name type="ordered locus">SRU_2755</name>
</gene>
<proteinExistence type="inferred from homology"/>
<accession>Q2RYY4</accession>
<dbReference type="EC" id="2.5.1.6" evidence="1"/>
<dbReference type="EMBL" id="CP000159">
    <property type="protein sequence ID" value="ABC44810.1"/>
    <property type="molecule type" value="Genomic_DNA"/>
</dbReference>
<dbReference type="RefSeq" id="WP_011405459.1">
    <property type="nucleotide sequence ID" value="NC_007677.1"/>
</dbReference>
<dbReference type="RefSeq" id="YP_446847.1">
    <property type="nucleotide sequence ID" value="NC_007677.1"/>
</dbReference>
<dbReference type="SMR" id="Q2RYY4"/>
<dbReference type="STRING" id="309807.SRU_2755"/>
<dbReference type="EnsemblBacteria" id="ABC44810">
    <property type="protein sequence ID" value="ABC44810"/>
    <property type="gene ID" value="SRU_2755"/>
</dbReference>
<dbReference type="KEGG" id="sru:SRU_2755"/>
<dbReference type="PATRIC" id="fig|309807.25.peg.2870"/>
<dbReference type="eggNOG" id="COG0192">
    <property type="taxonomic scope" value="Bacteria"/>
</dbReference>
<dbReference type="HOGENOM" id="CLU_041802_1_1_10"/>
<dbReference type="OrthoDB" id="9801686at2"/>
<dbReference type="UniPathway" id="UPA00315">
    <property type="reaction ID" value="UER00080"/>
</dbReference>
<dbReference type="Proteomes" id="UP000008674">
    <property type="component" value="Chromosome"/>
</dbReference>
<dbReference type="GO" id="GO:0005737">
    <property type="term" value="C:cytoplasm"/>
    <property type="evidence" value="ECO:0007669"/>
    <property type="project" value="UniProtKB-SubCell"/>
</dbReference>
<dbReference type="GO" id="GO:0005524">
    <property type="term" value="F:ATP binding"/>
    <property type="evidence" value="ECO:0007669"/>
    <property type="project" value="UniProtKB-UniRule"/>
</dbReference>
<dbReference type="GO" id="GO:0000287">
    <property type="term" value="F:magnesium ion binding"/>
    <property type="evidence" value="ECO:0007669"/>
    <property type="project" value="UniProtKB-UniRule"/>
</dbReference>
<dbReference type="GO" id="GO:0004478">
    <property type="term" value="F:methionine adenosyltransferase activity"/>
    <property type="evidence" value="ECO:0007669"/>
    <property type="project" value="UniProtKB-UniRule"/>
</dbReference>
<dbReference type="GO" id="GO:0006730">
    <property type="term" value="P:one-carbon metabolic process"/>
    <property type="evidence" value="ECO:0007669"/>
    <property type="project" value="UniProtKB-KW"/>
</dbReference>
<dbReference type="GO" id="GO:0006556">
    <property type="term" value="P:S-adenosylmethionine biosynthetic process"/>
    <property type="evidence" value="ECO:0007669"/>
    <property type="project" value="UniProtKB-UniRule"/>
</dbReference>
<dbReference type="CDD" id="cd18079">
    <property type="entry name" value="S-AdoMet_synt"/>
    <property type="match status" value="1"/>
</dbReference>
<dbReference type="FunFam" id="3.30.300.10:FF:000003">
    <property type="entry name" value="S-adenosylmethionine synthase"/>
    <property type="match status" value="1"/>
</dbReference>
<dbReference type="Gene3D" id="3.30.300.10">
    <property type="match status" value="3"/>
</dbReference>
<dbReference type="HAMAP" id="MF_00086">
    <property type="entry name" value="S_AdoMet_synth1"/>
    <property type="match status" value="1"/>
</dbReference>
<dbReference type="InterPro" id="IPR022631">
    <property type="entry name" value="ADOMET_SYNTHASE_CS"/>
</dbReference>
<dbReference type="InterPro" id="IPR022630">
    <property type="entry name" value="S-AdoMet_synt_C"/>
</dbReference>
<dbReference type="InterPro" id="IPR022629">
    <property type="entry name" value="S-AdoMet_synt_central"/>
</dbReference>
<dbReference type="InterPro" id="IPR022628">
    <property type="entry name" value="S-AdoMet_synt_N"/>
</dbReference>
<dbReference type="InterPro" id="IPR002133">
    <property type="entry name" value="S-AdoMet_synthetase"/>
</dbReference>
<dbReference type="InterPro" id="IPR022636">
    <property type="entry name" value="S-AdoMet_synthetase_sfam"/>
</dbReference>
<dbReference type="NCBIfam" id="TIGR01034">
    <property type="entry name" value="metK"/>
    <property type="match status" value="1"/>
</dbReference>
<dbReference type="PANTHER" id="PTHR11964">
    <property type="entry name" value="S-ADENOSYLMETHIONINE SYNTHETASE"/>
    <property type="match status" value="1"/>
</dbReference>
<dbReference type="Pfam" id="PF02773">
    <property type="entry name" value="S-AdoMet_synt_C"/>
    <property type="match status" value="1"/>
</dbReference>
<dbReference type="Pfam" id="PF02772">
    <property type="entry name" value="S-AdoMet_synt_M"/>
    <property type="match status" value="1"/>
</dbReference>
<dbReference type="Pfam" id="PF00438">
    <property type="entry name" value="S-AdoMet_synt_N"/>
    <property type="match status" value="1"/>
</dbReference>
<dbReference type="PIRSF" id="PIRSF000497">
    <property type="entry name" value="MAT"/>
    <property type="match status" value="1"/>
</dbReference>
<dbReference type="SUPFAM" id="SSF55973">
    <property type="entry name" value="S-adenosylmethionine synthetase"/>
    <property type="match status" value="3"/>
</dbReference>
<dbReference type="PROSITE" id="PS00376">
    <property type="entry name" value="ADOMET_SYNTHASE_1"/>
    <property type="match status" value="1"/>
</dbReference>
<dbReference type="PROSITE" id="PS00377">
    <property type="entry name" value="ADOMET_SYNTHASE_2"/>
    <property type="match status" value="1"/>
</dbReference>
<feature type="chain" id="PRO_0000241033" description="S-adenosylmethionine synthase">
    <location>
        <begin position="1"/>
        <end position="386"/>
    </location>
</feature>
<feature type="region of interest" description="Flexible loop" evidence="1">
    <location>
        <begin position="98"/>
        <end position="108"/>
    </location>
</feature>
<feature type="binding site" description="in other chain" evidence="1">
    <location>
        <position position="14"/>
    </location>
    <ligand>
        <name>ATP</name>
        <dbReference type="ChEBI" id="CHEBI:30616"/>
        <note>ligand shared between two neighboring subunits</note>
    </ligand>
</feature>
<feature type="binding site" evidence="1">
    <location>
        <position position="16"/>
    </location>
    <ligand>
        <name>Mg(2+)</name>
        <dbReference type="ChEBI" id="CHEBI:18420"/>
    </ligand>
</feature>
<feature type="binding site" evidence="1">
    <location>
        <position position="42"/>
    </location>
    <ligand>
        <name>K(+)</name>
        <dbReference type="ChEBI" id="CHEBI:29103"/>
    </ligand>
</feature>
<feature type="binding site" description="in other chain" evidence="1">
    <location>
        <position position="55"/>
    </location>
    <ligand>
        <name>L-methionine</name>
        <dbReference type="ChEBI" id="CHEBI:57844"/>
        <note>ligand shared between two neighboring subunits</note>
    </ligand>
</feature>
<feature type="binding site" description="in other chain" evidence="1">
    <location>
        <position position="98"/>
    </location>
    <ligand>
        <name>L-methionine</name>
        <dbReference type="ChEBI" id="CHEBI:57844"/>
        <note>ligand shared between two neighboring subunits</note>
    </ligand>
</feature>
<feature type="binding site" description="in other chain" evidence="1">
    <location>
        <begin position="162"/>
        <end position="164"/>
    </location>
    <ligand>
        <name>ATP</name>
        <dbReference type="ChEBI" id="CHEBI:30616"/>
        <note>ligand shared between two neighboring subunits</note>
    </ligand>
</feature>
<feature type="binding site" description="in other chain" evidence="1">
    <location>
        <begin position="230"/>
        <end position="231"/>
    </location>
    <ligand>
        <name>ATP</name>
        <dbReference type="ChEBI" id="CHEBI:30616"/>
        <note>ligand shared between two neighboring subunits</note>
    </ligand>
</feature>
<feature type="binding site" evidence="1">
    <location>
        <position position="239"/>
    </location>
    <ligand>
        <name>ATP</name>
        <dbReference type="ChEBI" id="CHEBI:30616"/>
        <note>ligand shared between two neighboring subunits</note>
    </ligand>
</feature>
<feature type="binding site" evidence="1">
    <location>
        <position position="239"/>
    </location>
    <ligand>
        <name>L-methionine</name>
        <dbReference type="ChEBI" id="CHEBI:57844"/>
        <note>ligand shared between two neighboring subunits</note>
    </ligand>
</feature>
<feature type="binding site" description="in other chain" evidence="1">
    <location>
        <begin position="245"/>
        <end position="246"/>
    </location>
    <ligand>
        <name>ATP</name>
        <dbReference type="ChEBI" id="CHEBI:30616"/>
        <note>ligand shared between two neighboring subunits</note>
    </ligand>
</feature>
<feature type="binding site" evidence="1">
    <location>
        <position position="262"/>
    </location>
    <ligand>
        <name>ATP</name>
        <dbReference type="ChEBI" id="CHEBI:30616"/>
        <note>ligand shared between two neighboring subunits</note>
    </ligand>
</feature>
<feature type="binding site" evidence="1">
    <location>
        <position position="266"/>
    </location>
    <ligand>
        <name>ATP</name>
        <dbReference type="ChEBI" id="CHEBI:30616"/>
        <note>ligand shared between two neighboring subunits</note>
    </ligand>
</feature>
<feature type="binding site" description="in other chain" evidence="1">
    <location>
        <position position="270"/>
    </location>
    <ligand>
        <name>L-methionine</name>
        <dbReference type="ChEBI" id="CHEBI:57844"/>
        <note>ligand shared between two neighboring subunits</note>
    </ligand>
</feature>
<protein>
    <recommendedName>
        <fullName evidence="1">S-adenosylmethionine synthase</fullName>
        <shortName evidence="1">AdoMet synthase</shortName>
        <ecNumber evidence="1">2.5.1.6</ecNumber>
    </recommendedName>
    <alternativeName>
        <fullName evidence="1">MAT</fullName>
    </alternativeName>
    <alternativeName>
        <fullName evidence="1">Methionine adenosyltransferase</fullName>
    </alternativeName>
</protein>